<sequence length="128" mass="14151">MIRTFMNSKIHRARVTESNLNYVGSITIDANILDAVDILPNEKVAIVNNNNGARFETYVIAGERGSGKMCLNGAASRLVEVGDVIIIMTYAQLNEDEMVDHSPKVAVLNENNEIIEMINEKENTISNV</sequence>
<comment type="function">
    <text evidence="1">Catalyzes the pyruvoyl-dependent decarboxylation of aspartate to produce beta-alanine.</text>
</comment>
<comment type="catalytic activity">
    <reaction evidence="1">
        <text>L-aspartate + H(+) = beta-alanine + CO2</text>
        <dbReference type="Rhea" id="RHEA:19497"/>
        <dbReference type="ChEBI" id="CHEBI:15378"/>
        <dbReference type="ChEBI" id="CHEBI:16526"/>
        <dbReference type="ChEBI" id="CHEBI:29991"/>
        <dbReference type="ChEBI" id="CHEBI:57966"/>
        <dbReference type="EC" id="4.1.1.11"/>
    </reaction>
</comment>
<comment type="cofactor">
    <cofactor evidence="1">
        <name>pyruvate</name>
        <dbReference type="ChEBI" id="CHEBI:15361"/>
    </cofactor>
    <text evidence="1">Binds 1 pyruvoyl group covalently per subunit.</text>
</comment>
<comment type="pathway">
    <text evidence="1">Cofactor biosynthesis; (R)-pantothenate biosynthesis; beta-alanine from L-aspartate: step 1/1.</text>
</comment>
<comment type="subunit">
    <text evidence="1">Heterooctamer of four alpha and four beta subunits.</text>
</comment>
<comment type="subcellular location">
    <subcellularLocation>
        <location evidence="1">Cytoplasm</location>
    </subcellularLocation>
</comment>
<comment type="PTM">
    <text evidence="1">Is synthesized initially as an inactive proenzyme, which is activated by self-cleavage at a specific serine bond to produce a beta-subunit with a hydroxyl group at its C-terminus and an alpha-subunit with a pyruvoyl group at its N-terminus.</text>
</comment>
<comment type="similarity">
    <text evidence="1">Belongs to the PanD family.</text>
</comment>
<proteinExistence type="inferred from homology"/>
<gene>
    <name evidence="1" type="primary">panD</name>
    <name type="ordered locus">SERP2150</name>
</gene>
<keyword id="KW-0068">Autocatalytic cleavage</keyword>
<keyword id="KW-0963">Cytoplasm</keyword>
<keyword id="KW-0210">Decarboxylase</keyword>
<keyword id="KW-0456">Lyase</keyword>
<keyword id="KW-0566">Pantothenate biosynthesis</keyword>
<keyword id="KW-0670">Pyruvate</keyword>
<keyword id="KW-1185">Reference proteome</keyword>
<keyword id="KW-0704">Schiff base</keyword>
<keyword id="KW-0865">Zymogen</keyword>
<reference key="1">
    <citation type="journal article" date="2005" name="J. Bacteriol.">
        <title>Insights on evolution of virulence and resistance from the complete genome analysis of an early methicillin-resistant Staphylococcus aureus strain and a biofilm-producing methicillin-resistant Staphylococcus epidermidis strain.</title>
        <authorList>
            <person name="Gill S.R."/>
            <person name="Fouts D.E."/>
            <person name="Archer G.L."/>
            <person name="Mongodin E.F."/>
            <person name="DeBoy R.T."/>
            <person name="Ravel J."/>
            <person name="Paulsen I.T."/>
            <person name="Kolonay J.F."/>
            <person name="Brinkac L.M."/>
            <person name="Beanan M.J."/>
            <person name="Dodson R.J."/>
            <person name="Daugherty S.C."/>
            <person name="Madupu R."/>
            <person name="Angiuoli S.V."/>
            <person name="Durkin A.S."/>
            <person name="Haft D.H."/>
            <person name="Vamathevan J.J."/>
            <person name="Khouri H."/>
            <person name="Utterback T.R."/>
            <person name="Lee C."/>
            <person name="Dimitrov G."/>
            <person name="Jiang L."/>
            <person name="Qin H."/>
            <person name="Weidman J."/>
            <person name="Tran K."/>
            <person name="Kang K.H."/>
            <person name="Hance I.R."/>
            <person name="Nelson K.E."/>
            <person name="Fraser C.M."/>
        </authorList>
    </citation>
    <scope>NUCLEOTIDE SEQUENCE [LARGE SCALE GENOMIC DNA]</scope>
    <source>
        <strain>ATCC 35984 / DSM 28319 / BCRC 17069 / CCUG 31568 / BM 3577 / RP62A</strain>
    </source>
</reference>
<name>PAND_STAEQ</name>
<organism>
    <name type="scientific">Staphylococcus epidermidis (strain ATCC 35984 / DSM 28319 / BCRC 17069 / CCUG 31568 / BM 3577 / RP62A)</name>
    <dbReference type="NCBI Taxonomy" id="176279"/>
    <lineage>
        <taxon>Bacteria</taxon>
        <taxon>Bacillati</taxon>
        <taxon>Bacillota</taxon>
        <taxon>Bacilli</taxon>
        <taxon>Bacillales</taxon>
        <taxon>Staphylococcaceae</taxon>
        <taxon>Staphylococcus</taxon>
    </lineage>
</organism>
<protein>
    <recommendedName>
        <fullName evidence="1">Aspartate 1-decarboxylase</fullName>
        <ecNumber evidence="1">4.1.1.11</ecNumber>
    </recommendedName>
    <alternativeName>
        <fullName evidence="1">Aspartate alpha-decarboxylase</fullName>
    </alternativeName>
    <component>
        <recommendedName>
            <fullName evidence="1">Aspartate 1-decarboxylase beta chain</fullName>
        </recommendedName>
    </component>
    <component>
        <recommendedName>
            <fullName evidence="1">Aspartate 1-decarboxylase alpha chain</fullName>
        </recommendedName>
    </component>
</protein>
<accession>Q5HL37</accession>
<evidence type="ECO:0000255" key="1">
    <source>
        <dbReference type="HAMAP-Rule" id="MF_00446"/>
    </source>
</evidence>
<feature type="chain" id="PRO_0000023171" description="Aspartate 1-decarboxylase beta chain" evidence="1">
    <location>
        <begin position="1"/>
        <end position="24"/>
    </location>
</feature>
<feature type="chain" id="PRO_0000023172" description="Aspartate 1-decarboxylase alpha chain" evidence="1">
    <location>
        <begin position="25"/>
        <end position="128"/>
    </location>
</feature>
<feature type="active site" description="Schiff-base intermediate with substrate; via pyruvic acid" evidence="1">
    <location>
        <position position="25"/>
    </location>
</feature>
<feature type="active site" description="Proton donor" evidence="1">
    <location>
        <position position="58"/>
    </location>
</feature>
<feature type="binding site" evidence="1">
    <location>
        <position position="57"/>
    </location>
    <ligand>
        <name>substrate</name>
    </ligand>
</feature>
<feature type="binding site" evidence="1">
    <location>
        <begin position="73"/>
        <end position="75"/>
    </location>
    <ligand>
        <name>substrate</name>
    </ligand>
</feature>
<feature type="modified residue" description="Pyruvic acid (Ser)" evidence="1">
    <location>
        <position position="25"/>
    </location>
</feature>
<dbReference type="EC" id="4.1.1.11" evidence="1"/>
<dbReference type="EMBL" id="CP000029">
    <property type="protein sequence ID" value="AAW53065.1"/>
    <property type="molecule type" value="Genomic_DNA"/>
</dbReference>
<dbReference type="RefSeq" id="WP_001830619.1">
    <property type="nucleotide sequence ID" value="NC_002976.3"/>
</dbReference>
<dbReference type="SMR" id="Q5HL37"/>
<dbReference type="STRING" id="176279.SERP2150"/>
<dbReference type="GeneID" id="50017783"/>
<dbReference type="KEGG" id="ser:SERP2150"/>
<dbReference type="eggNOG" id="COG0853">
    <property type="taxonomic scope" value="Bacteria"/>
</dbReference>
<dbReference type="HOGENOM" id="CLU_115305_2_0_9"/>
<dbReference type="UniPathway" id="UPA00028">
    <property type="reaction ID" value="UER00002"/>
</dbReference>
<dbReference type="Proteomes" id="UP000000531">
    <property type="component" value="Chromosome"/>
</dbReference>
<dbReference type="GO" id="GO:0005829">
    <property type="term" value="C:cytosol"/>
    <property type="evidence" value="ECO:0007669"/>
    <property type="project" value="TreeGrafter"/>
</dbReference>
<dbReference type="GO" id="GO:0004068">
    <property type="term" value="F:aspartate 1-decarboxylase activity"/>
    <property type="evidence" value="ECO:0007669"/>
    <property type="project" value="UniProtKB-UniRule"/>
</dbReference>
<dbReference type="GO" id="GO:0006523">
    <property type="term" value="P:alanine biosynthetic process"/>
    <property type="evidence" value="ECO:0007669"/>
    <property type="project" value="InterPro"/>
</dbReference>
<dbReference type="GO" id="GO:0015940">
    <property type="term" value="P:pantothenate biosynthetic process"/>
    <property type="evidence" value="ECO:0007669"/>
    <property type="project" value="UniProtKB-UniRule"/>
</dbReference>
<dbReference type="CDD" id="cd06919">
    <property type="entry name" value="Asp_decarbox"/>
    <property type="match status" value="1"/>
</dbReference>
<dbReference type="Gene3D" id="2.40.40.20">
    <property type="match status" value="1"/>
</dbReference>
<dbReference type="HAMAP" id="MF_00446">
    <property type="entry name" value="PanD"/>
    <property type="match status" value="1"/>
</dbReference>
<dbReference type="InterPro" id="IPR009010">
    <property type="entry name" value="Asp_de-COase-like_dom_sf"/>
</dbReference>
<dbReference type="InterPro" id="IPR003190">
    <property type="entry name" value="Asp_decarbox"/>
</dbReference>
<dbReference type="NCBIfam" id="TIGR00223">
    <property type="entry name" value="panD"/>
    <property type="match status" value="1"/>
</dbReference>
<dbReference type="PANTHER" id="PTHR21012">
    <property type="entry name" value="ASPARTATE 1-DECARBOXYLASE"/>
    <property type="match status" value="1"/>
</dbReference>
<dbReference type="PANTHER" id="PTHR21012:SF0">
    <property type="entry name" value="ASPARTATE 1-DECARBOXYLASE"/>
    <property type="match status" value="1"/>
</dbReference>
<dbReference type="Pfam" id="PF02261">
    <property type="entry name" value="Asp_decarbox"/>
    <property type="match status" value="1"/>
</dbReference>
<dbReference type="PIRSF" id="PIRSF006246">
    <property type="entry name" value="Asp_decarbox"/>
    <property type="match status" value="1"/>
</dbReference>
<dbReference type="SUPFAM" id="SSF50692">
    <property type="entry name" value="ADC-like"/>
    <property type="match status" value="1"/>
</dbReference>